<protein>
    <recommendedName>
        <fullName>CASP-like protein 2D1</fullName>
        <shortName>OsCASPL2D1</shortName>
    </recommendedName>
</protein>
<sequence>MRSGEGSTAAAAAAEEEKVKVAAPFRLAELGLRVCAVPLAVASVWEMATNKQVDETYGEVRFSDLSGFRYLVWINAITAAYSVASILLSSCRFITRFDWLIFILDQASAYLLLTSASAAAEVVYLAREGDREVSWGEVCSYFGRFCGAATVSVALNAAALLCFMALSLISAFRVFTKFNPPSQSNSKQQLSQEQGKPVVSG</sequence>
<accession>A2X2I0</accession>
<evidence type="ECO:0000250" key="1"/>
<evidence type="ECO:0000255" key="2"/>
<evidence type="ECO:0000256" key="3">
    <source>
        <dbReference type="SAM" id="MobiDB-lite"/>
    </source>
</evidence>
<evidence type="ECO:0000305" key="4"/>
<gene>
    <name type="ORF">OsI_06397</name>
</gene>
<dbReference type="EMBL" id="CM000127">
    <property type="protein sequence ID" value="EAY85040.1"/>
    <property type="molecule type" value="Genomic_DNA"/>
</dbReference>
<dbReference type="EMBL" id="CT848495">
    <property type="status" value="NOT_ANNOTATED_CDS"/>
    <property type="molecule type" value="mRNA"/>
</dbReference>
<dbReference type="STRING" id="39946.A2X2I0"/>
<dbReference type="EnsemblPlants" id="BGIOSGA006860-TA">
    <property type="protein sequence ID" value="BGIOSGA006860-PA"/>
    <property type="gene ID" value="BGIOSGA006860"/>
</dbReference>
<dbReference type="EnsemblPlants" id="OsGoSa_02g0009220.01">
    <property type="protein sequence ID" value="OsGoSa_02g0009220.01"/>
    <property type="gene ID" value="OsGoSa_02g0009220"/>
</dbReference>
<dbReference type="EnsemblPlants" id="OsIR64_02g0008830.01">
    <property type="protein sequence ID" value="OsIR64_02g0008830.01"/>
    <property type="gene ID" value="OsIR64_02g0008830"/>
</dbReference>
<dbReference type="EnsemblPlants" id="OsKYG_02g0008910.01">
    <property type="protein sequence ID" value="OsKYG_02g0008910.01"/>
    <property type="gene ID" value="OsKYG_02g0008910"/>
</dbReference>
<dbReference type="EnsemblPlants" id="OsLaMu_02g0008960.01">
    <property type="protein sequence ID" value="OsLaMu_02g0008960.01"/>
    <property type="gene ID" value="OsLaMu_02g0008960"/>
</dbReference>
<dbReference type="EnsemblPlants" id="OsLima_02g0009260.01">
    <property type="protein sequence ID" value="OsLima_02g0009260.01"/>
    <property type="gene ID" value="OsLima_02g0009260"/>
</dbReference>
<dbReference type="EnsemblPlants" id="OsLiXu_02g0009200.01">
    <property type="protein sequence ID" value="OsLiXu_02g0009200.01"/>
    <property type="gene ID" value="OsLiXu_02g0009200"/>
</dbReference>
<dbReference type="EnsemblPlants" id="OsMH63_02G009230_01">
    <property type="protein sequence ID" value="OsMH63_02G009230_01"/>
    <property type="gene ID" value="OsMH63_02G009230"/>
</dbReference>
<dbReference type="EnsemblPlants" id="OsPr106_02g0009000.01">
    <property type="protein sequence ID" value="OsPr106_02g0009000.01"/>
    <property type="gene ID" value="OsPr106_02g0009000"/>
</dbReference>
<dbReference type="EnsemblPlants" id="OsZS97_02G008810_01">
    <property type="protein sequence ID" value="OsZS97_02G008810_01"/>
    <property type="gene ID" value="OsZS97_02G008810"/>
</dbReference>
<dbReference type="Gramene" id="BGIOSGA006860-TA">
    <property type="protein sequence ID" value="BGIOSGA006860-PA"/>
    <property type="gene ID" value="BGIOSGA006860"/>
</dbReference>
<dbReference type="Gramene" id="OsGoSa_02g0009220.01">
    <property type="protein sequence ID" value="OsGoSa_02g0009220.01"/>
    <property type="gene ID" value="OsGoSa_02g0009220"/>
</dbReference>
<dbReference type="Gramene" id="OsIR64_02g0008830.01">
    <property type="protein sequence ID" value="OsIR64_02g0008830.01"/>
    <property type="gene ID" value="OsIR64_02g0008830"/>
</dbReference>
<dbReference type="Gramene" id="OsKYG_02g0008910.01">
    <property type="protein sequence ID" value="OsKYG_02g0008910.01"/>
    <property type="gene ID" value="OsKYG_02g0008910"/>
</dbReference>
<dbReference type="Gramene" id="OsLaMu_02g0008960.01">
    <property type="protein sequence ID" value="OsLaMu_02g0008960.01"/>
    <property type="gene ID" value="OsLaMu_02g0008960"/>
</dbReference>
<dbReference type="Gramene" id="OsLima_02g0009260.01">
    <property type="protein sequence ID" value="OsLima_02g0009260.01"/>
    <property type="gene ID" value="OsLima_02g0009260"/>
</dbReference>
<dbReference type="Gramene" id="OsLiXu_02g0009200.01">
    <property type="protein sequence ID" value="OsLiXu_02g0009200.01"/>
    <property type="gene ID" value="OsLiXu_02g0009200"/>
</dbReference>
<dbReference type="Gramene" id="OsMH63_02G009230_01">
    <property type="protein sequence ID" value="OsMH63_02G009230_01"/>
    <property type="gene ID" value="OsMH63_02G009230"/>
</dbReference>
<dbReference type="Gramene" id="OsPr106_02g0009000.01">
    <property type="protein sequence ID" value="OsPr106_02g0009000.01"/>
    <property type="gene ID" value="OsPr106_02g0009000"/>
</dbReference>
<dbReference type="Gramene" id="OsZS97_02G008810_01">
    <property type="protein sequence ID" value="OsZS97_02G008810_01"/>
    <property type="gene ID" value="OsZS97_02G008810"/>
</dbReference>
<dbReference type="HOGENOM" id="CLU_066104_2_1_1"/>
<dbReference type="OMA" id="FSMFEPP"/>
<dbReference type="OrthoDB" id="755577at2759"/>
<dbReference type="Proteomes" id="UP000007015">
    <property type="component" value="Chromosome 2"/>
</dbReference>
<dbReference type="GO" id="GO:0005886">
    <property type="term" value="C:plasma membrane"/>
    <property type="evidence" value="ECO:0007669"/>
    <property type="project" value="UniProtKB-SubCell"/>
</dbReference>
<dbReference type="InterPro" id="IPR006459">
    <property type="entry name" value="CASP/CASPL"/>
</dbReference>
<dbReference type="InterPro" id="IPR006702">
    <property type="entry name" value="CASP_dom"/>
</dbReference>
<dbReference type="NCBIfam" id="TIGR01569">
    <property type="entry name" value="A_tha_TIGR01569"/>
    <property type="match status" value="1"/>
</dbReference>
<dbReference type="PANTHER" id="PTHR33573:SF30">
    <property type="entry name" value="CASP-LIKE PROTEIN 2C1-RELATED"/>
    <property type="match status" value="1"/>
</dbReference>
<dbReference type="PANTHER" id="PTHR33573">
    <property type="entry name" value="CASP-LIKE PROTEIN 4A4"/>
    <property type="match status" value="1"/>
</dbReference>
<dbReference type="Pfam" id="PF04535">
    <property type="entry name" value="CASP_dom"/>
    <property type="match status" value="1"/>
</dbReference>
<name>CSPL9_ORYSI</name>
<organism>
    <name type="scientific">Oryza sativa subsp. indica</name>
    <name type="common">Rice</name>
    <dbReference type="NCBI Taxonomy" id="39946"/>
    <lineage>
        <taxon>Eukaryota</taxon>
        <taxon>Viridiplantae</taxon>
        <taxon>Streptophyta</taxon>
        <taxon>Embryophyta</taxon>
        <taxon>Tracheophyta</taxon>
        <taxon>Spermatophyta</taxon>
        <taxon>Magnoliopsida</taxon>
        <taxon>Liliopsida</taxon>
        <taxon>Poales</taxon>
        <taxon>Poaceae</taxon>
        <taxon>BOP clade</taxon>
        <taxon>Oryzoideae</taxon>
        <taxon>Oryzeae</taxon>
        <taxon>Oryzinae</taxon>
        <taxon>Oryza</taxon>
        <taxon>Oryza sativa</taxon>
    </lineage>
</organism>
<comment type="subunit">
    <text evidence="1">Homodimer and heterodimers.</text>
</comment>
<comment type="subcellular location">
    <subcellularLocation>
        <location evidence="1">Cell membrane</location>
        <topology evidence="1">Multi-pass membrane protein</topology>
    </subcellularLocation>
</comment>
<comment type="similarity">
    <text evidence="4">Belongs to the Casparian strip membrane proteins (CASP) family.</text>
</comment>
<reference key="1">
    <citation type="journal article" date="2005" name="PLoS Biol.">
        <title>The genomes of Oryza sativa: a history of duplications.</title>
        <authorList>
            <person name="Yu J."/>
            <person name="Wang J."/>
            <person name="Lin W."/>
            <person name="Li S."/>
            <person name="Li H."/>
            <person name="Zhou J."/>
            <person name="Ni P."/>
            <person name="Dong W."/>
            <person name="Hu S."/>
            <person name="Zeng C."/>
            <person name="Zhang J."/>
            <person name="Zhang Y."/>
            <person name="Li R."/>
            <person name="Xu Z."/>
            <person name="Li S."/>
            <person name="Li X."/>
            <person name="Zheng H."/>
            <person name="Cong L."/>
            <person name="Lin L."/>
            <person name="Yin J."/>
            <person name="Geng J."/>
            <person name="Li G."/>
            <person name="Shi J."/>
            <person name="Liu J."/>
            <person name="Lv H."/>
            <person name="Li J."/>
            <person name="Wang J."/>
            <person name="Deng Y."/>
            <person name="Ran L."/>
            <person name="Shi X."/>
            <person name="Wang X."/>
            <person name="Wu Q."/>
            <person name="Li C."/>
            <person name="Ren X."/>
            <person name="Wang J."/>
            <person name="Wang X."/>
            <person name="Li D."/>
            <person name="Liu D."/>
            <person name="Zhang X."/>
            <person name="Ji Z."/>
            <person name="Zhao W."/>
            <person name="Sun Y."/>
            <person name="Zhang Z."/>
            <person name="Bao J."/>
            <person name="Han Y."/>
            <person name="Dong L."/>
            <person name="Ji J."/>
            <person name="Chen P."/>
            <person name="Wu S."/>
            <person name="Liu J."/>
            <person name="Xiao Y."/>
            <person name="Bu D."/>
            <person name="Tan J."/>
            <person name="Yang L."/>
            <person name="Ye C."/>
            <person name="Zhang J."/>
            <person name="Xu J."/>
            <person name="Zhou Y."/>
            <person name="Yu Y."/>
            <person name="Zhang B."/>
            <person name="Zhuang S."/>
            <person name="Wei H."/>
            <person name="Liu B."/>
            <person name="Lei M."/>
            <person name="Yu H."/>
            <person name="Li Y."/>
            <person name="Xu H."/>
            <person name="Wei S."/>
            <person name="He X."/>
            <person name="Fang L."/>
            <person name="Zhang Z."/>
            <person name="Zhang Y."/>
            <person name="Huang X."/>
            <person name="Su Z."/>
            <person name="Tong W."/>
            <person name="Li J."/>
            <person name="Tong Z."/>
            <person name="Li S."/>
            <person name="Ye J."/>
            <person name="Wang L."/>
            <person name="Fang L."/>
            <person name="Lei T."/>
            <person name="Chen C.-S."/>
            <person name="Chen H.-C."/>
            <person name="Xu Z."/>
            <person name="Li H."/>
            <person name="Huang H."/>
            <person name="Zhang F."/>
            <person name="Xu H."/>
            <person name="Li N."/>
            <person name="Zhao C."/>
            <person name="Li S."/>
            <person name="Dong L."/>
            <person name="Huang Y."/>
            <person name="Li L."/>
            <person name="Xi Y."/>
            <person name="Qi Q."/>
            <person name="Li W."/>
            <person name="Zhang B."/>
            <person name="Hu W."/>
            <person name="Zhang Y."/>
            <person name="Tian X."/>
            <person name="Jiao Y."/>
            <person name="Liang X."/>
            <person name="Jin J."/>
            <person name="Gao L."/>
            <person name="Zheng W."/>
            <person name="Hao B."/>
            <person name="Liu S.-M."/>
            <person name="Wang W."/>
            <person name="Yuan L."/>
            <person name="Cao M."/>
            <person name="McDermott J."/>
            <person name="Samudrala R."/>
            <person name="Wang J."/>
            <person name="Wong G.K.-S."/>
            <person name="Yang H."/>
        </authorList>
    </citation>
    <scope>NUCLEOTIDE SEQUENCE [LARGE SCALE GENOMIC DNA]</scope>
    <source>
        <strain>cv. 93-11</strain>
    </source>
</reference>
<reference key="2">
    <citation type="journal article" date="2007" name="Plant Mol. Biol.">
        <title>A collection of 10,096 indica rice full-length cDNAs reveals highly expressed sequence divergence between Oryza sativa indica and japonica subspecies.</title>
        <authorList>
            <person name="Liu X."/>
            <person name="Lu T."/>
            <person name="Yu S."/>
            <person name="Li Y."/>
            <person name="Huang Y."/>
            <person name="Huang T."/>
            <person name="Zhang L."/>
            <person name="Zhu J."/>
            <person name="Zhao Q."/>
            <person name="Fan D."/>
            <person name="Mu J."/>
            <person name="Shangguan Y."/>
            <person name="Feng Q."/>
            <person name="Guan J."/>
            <person name="Ying K."/>
            <person name="Zhang Y."/>
            <person name="Lin Z."/>
            <person name="Sun Z."/>
            <person name="Qian Q."/>
            <person name="Lu Y."/>
            <person name="Han B."/>
        </authorList>
    </citation>
    <scope>NUCLEOTIDE SEQUENCE [LARGE SCALE MRNA]</scope>
    <source>
        <strain>cv. Guang-Lu-Ai No.4</strain>
    </source>
</reference>
<reference key="3">
    <citation type="journal article" date="2014" name="Plant Physiol.">
        <title>Functional and evolutionary analysis of the CASPARIAN STRIP MEMBRANE DOMAIN PROTEIN family.</title>
        <authorList>
            <person name="Roppolo D."/>
            <person name="Boeckmann B."/>
            <person name="Pfister A."/>
            <person name="Boutet E."/>
            <person name="Rubio M.C."/>
            <person name="Denervaud-Tendon V."/>
            <person name="Vermeer J.E."/>
            <person name="Gheyselinck J."/>
            <person name="Xenarios I."/>
            <person name="Geldner N."/>
        </authorList>
    </citation>
    <scope>GENE FAMILY</scope>
    <scope>NOMENCLATURE</scope>
</reference>
<keyword id="KW-1003">Cell membrane</keyword>
<keyword id="KW-0472">Membrane</keyword>
<keyword id="KW-1185">Reference proteome</keyword>
<keyword id="KW-0812">Transmembrane</keyword>
<keyword id="KW-1133">Transmembrane helix</keyword>
<proteinExistence type="evidence at transcript level"/>
<feature type="chain" id="PRO_0000412025" description="CASP-like protein 2D1">
    <location>
        <begin position="1"/>
        <end position="201"/>
    </location>
</feature>
<feature type="topological domain" description="Cytoplasmic" evidence="2">
    <location>
        <begin position="1"/>
        <end position="26"/>
    </location>
</feature>
<feature type="transmembrane region" description="Helical" evidence="2">
    <location>
        <begin position="27"/>
        <end position="47"/>
    </location>
</feature>
<feature type="topological domain" description="Extracellular" evidence="2">
    <location>
        <begin position="48"/>
        <end position="70"/>
    </location>
</feature>
<feature type="transmembrane region" description="Helical" evidence="2">
    <location>
        <begin position="71"/>
        <end position="91"/>
    </location>
</feature>
<feature type="topological domain" description="Cytoplasmic" evidence="2">
    <location>
        <begin position="92"/>
        <end position="98"/>
    </location>
</feature>
<feature type="transmembrane region" description="Helical" evidence="2">
    <location>
        <begin position="99"/>
        <end position="119"/>
    </location>
</feature>
<feature type="topological domain" description="Extracellular" evidence="2">
    <location>
        <begin position="120"/>
        <end position="148"/>
    </location>
</feature>
<feature type="transmembrane region" description="Helical" evidence="2">
    <location>
        <begin position="149"/>
        <end position="169"/>
    </location>
</feature>
<feature type="topological domain" description="Cytoplasmic" evidence="2">
    <location>
        <begin position="170"/>
        <end position="201"/>
    </location>
</feature>
<feature type="region of interest" description="Disordered" evidence="3">
    <location>
        <begin position="180"/>
        <end position="201"/>
    </location>
</feature>
<feature type="compositionally biased region" description="Polar residues" evidence="3">
    <location>
        <begin position="180"/>
        <end position="194"/>
    </location>
</feature>